<keyword id="KW-0963">Cytoplasm</keyword>
<keyword id="KW-0227">DNA damage</keyword>
<keyword id="KW-0234">DNA repair</keyword>
<keyword id="KW-0235">DNA replication</keyword>
<keyword id="KW-0238">DNA-binding</keyword>
<keyword id="KW-0239">DNA-directed DNA polymerase</keyword>
<keyword id="KW-0460">Magnesium</keyword>
<keyword id="KW-0479">Metal-binding</keyword>
<keyword id="KW-0515">Mutator protein</keyword>
<keyword id="KW-0548">Nucleotidyltransferase</keyword>
<keyword id="KW-1185">Reference proteome</keyword>
<keyword id="KW-0808">Transferase</keyword>
<dbReference type="EC" id="2.7.7.7" evidence="1"/>
<dbReference type="EMBL" id="CP000569">
    <property type="protein sequence ID" value="ABN74134.1"/>
    <property type="molecule type" value="Genomic_DNA"/>
</dbReference>
<dbReference type="RefSeq" id="WP_011848520.1">
    <property type="nucleotide sequence ID" value="NC_009053.1"/>
</dbReference>
<dbReference type="SMR" id="A3N148"/>
<dbReference type="STRING" id="416269.APL_1040"/>
<dbReference type="EnsemblBacteria" id="ABN74134">
    <property type="protein sequence ID" value="ABN74134"/>
    <property type="gene ID" value="APL_1040"/>
</dbReference>
<dbReference type="KEGG" id="apl:APL_1040"/>
<dbReference type="PATRIC" id="fig|416269.6.peg.1088"/>
<dbReference type="eggNOG" id="COG0389">
    <property type="taxonomic scope" value="Bacteria"/>
</dbReference>
<dbReference type="HOGENOM" id="CLU_012348_1_2_6"/>
<dbReference type="Proteomes" id="UP000001432">
    <property type="component" value="Chromosome"/>
</dbReference>
<dbReference type="GO" id="GO:0005829">
    <property type="term" value="C:cytosol"/>
    <property type="evidence" value="ECO:0007669"/>
    <property type="project" value="TreeGrafter"/>
</dbReference>
<dbReference type="GO" id="GO:0003684">
    <property type="term" value="F:damaged DNA binding"/>
    <property type="evidence" value="ECO:0007669"/>
    <property type="project" value="InterPro"/>
</dbReference>
<dbReference type="GO" id="GO:0003887">
    <property type="term" value="F:DNA-directed DNA polymerase activity"/>
    <property type="evidence" value="ECO:0007669"/>
    <property type="project" value="UniProtKB-UniRule"/>
</dbReference>
<dbReference type="GO" id="GO:0000287">
    <property type="term" value="F:magnesium ion binding"/>
    <property type="evidence" value="ECO:0007669"/>
    <property type="project" value="UniProtKB-UniRule"/>
</dbReference>
<dbReference type="GO" id="GO:0006261">
    <property type="term" value="P:DNA-templated DNA replication"/>
    <property type="evidence" value="ECO:0007669"/>
    <property type="project" value="UniProtKB-UniRule"/>
</dbReference>
<dbReference type="GO" id="GO:0042276">
    <property type="term" value="P:error-prone translesion synthesis"/>
    <property type="evidence" value="ECO:0007669"/>
    <property type="project" value="TreeGrafter"/>
</dbReference>
<dbReference type="GO" id="GO:0009432">
    <property type="term" value="P:SOS response"/>
    <property type="evidence" value="ECO:0007669"/>
    <property type="project" value="TreeGrafter"/>
</dbReference>
<dbReference type="CDD" id="cd03586">
    <property type="entry name" value="PolY_Pol_IV_kappa"/>
    <property type="match status" value="1"/>
</dbReference>
<dbReference type="FunFam" id="1.10.150.20:FF:000019">
    <property type="entry name" value="DNA polymerase IV"/>
    <property type="match status" value="1"/>
</dbReference>
<dbReference type="FunFam" id="3.30.70.270:FF:000002">
    <property type="entry name" value="DNA polymerase IV"/>
    <property type="match status" value="1"/>
</dbReference>
<dbReference type="FunFam" id="3.40.1170.60:FF:000001">
    <property type="entry name" value="DNA polymerase IV"/>
    <property type="match status" value="1"/>
</dbReference>
<dbReference type="Gene3D" id="3.30.70.270">
    <property type="match status" value="1"/>
</dbReference>
<dbReference type="Gene3D" id="3.40.1170.60">
    <property type="match status" value="1"/>
</dbReference>
<dbReference type="Gene3D" id="1.10.150.20">
    <property type="entry name" value="5' to 3' exonuclease, C-terminal subdomain"/>
    <property type="match status" value="1"/>
</dbReference>
<dbReference type="Gene3D" id="3.30.1490.100">
    <property type="entry name" value="DNA polymerase, Y-family, little finger domain"/>
    <property type="match status" value="1"/>
</dbReference>
<dbReference type="HAMAP" id="MF_01113">
    <property type="entry name" value="DNApol_IV"/>
    <property type="match status" value="1"/>
</dbReference>
<dbReference type="InterPro" id="IPR043502">
    <property type="entry name" value="DNA/RNA_pol_sf"/>
</dbReference>
<dbReference type="InterPro" id="IPR036775">
    <property type="entry name" value="DNA_pol_Y-fam_lit_finger_sf"/>
</dbReference>
<dbReference type="InterPro" id="IPR017961">
    <property type="entry name" value="DNA_pol_Y-fam_little_finger"/>
</dbReference>
<dbReference type="InterPro" id="IPR050116">
    <property type="entry name" value="DNA_polymerase-Y"/>
</dbReference>
<dbReference type="InterPro" id="IPR022880">
    <property type="entry name" value="DNApol_IV"/>
</dbReference>
<dbReference type="InterPro" id="IPR053848">
    <property type="entry name" value="IMS_HHH_1"/>
</dbReference>
<dbReference type="InterPro" id="IPR043128">
    <property type="entry name" value="Rev_trsase/Diguanyl_cyclase"/>
</dbReference>
<dbReference type="InterPro" id="IPR001126">
    <property type="entry name" value="UmuC"/>
</dbReference>
<dbReference type="NCBIfam" id="NF002677">
    <property type="entry name" value="PRK02406.1"/>
    <property type="match status" value="1"/>
</dbReference>
<dbReference type="PANTHER" id="PTHR11076:SF33">
    <property type="entry name" value="DNA POLYMERASE KAPPA"/>
    <property type="match status" value="1"/>
</dbReference>
<dbReference type="PANTHER" id="PTHR11076">
    <property type="entry name" value="DNA REPAIR POLYMERASE UMUC / TRANSFERASE FAMILY MEMBER"/>
    <property type="match status" value="1"/>
</dbReference>
<dbReference type="Pfam" id="PF00817">
    <property type="entry name" value="IMS"/>
    <property type="match status" value="1"/>
</dbReference>
<dbReference type="Pfam" id="PF11799">
    <property type="entry name" value="IMS_C"/>
    <property type="match status" value="1"/>
</dbReference>
<dbReference type="Pfam" id="PF21999">
    <property type="entry name" value="IMS_HHH_1"/>
    <property type="match status" value="1"/>
</dbReference>
<dbReference type="SUPFAM" id="SSF56672">
    <property type="entry name" value="DNA/RNA polymerases"/>
    <property type="match status" value="1"/>
</dbReference>
<dbReference type="SUPFAM" id="SSF100879">
    <property type="entry name" value="Lesion bypass DNA polymerase (Y-family), little finger domain"/>
    <property type="match status" value="1"/>
</dbReference>
<dbReference type="PROSITE" id="PS50173">
    <property type="entry name" value="UMUC"/>
    <property type="match status" value="1"/>
</dbReference>
<organism>
    <name type="scientific">Actinobacillus pleuropneumoniae serotype 5b (strain L20)</name>
    <dbReference type="NCBI Taxonomy" id="416269"/>
    <lineage>
        <taxon>Bacteria</taxon>
        <taxon>Pseudomonadati</taxon>
        <taxon>Pseudomonadota</taxon>
        <taxon>Gammaproteobacteria</taxon>
        <taxon>Pasteurellales</taxon>
        <taxon>Pasteurellaceae</taxon>
        <taxon>Actinobacillus</taxon>
    </lineage>
</organism>
<sequence length="356" mass="40808">MATQRKIIHIDMDCFYAAIEMRENPALIGKPVAVGGSVEGRGVLTTCNYEARKFGLHSAMPTAQALKRCPNLILVPVNMPLYKAVSEQIHQIFRRYTDIVELLSLDEAYLDVTDCRQCSGSATWIAQEIRDAIWNELHLTASAGIAPLKFLAKIASDQNKPNGQFVISPENMTAFIYDLPLKKIPRVGKVTNEKLAQLGLHTCGDIQHSDKAFIYKTFGKFGQRLWEFSHAIDNRKIEANRPRKSLAVENTLPTDIWHLAEAEQIVDELFKKLVFRLQRNWGERSLQEFKKLAIKLKFGDFTQTTLERTTDGLSRERFIELLQQVWQRTNRRSVRLIGLSVHYPTEKVKKQLNLWE</sequence>
<protein>
    <recommendedName>
        <fullName evidence="1">DNA polymerase IV</fullName>
        <shortName evidence="1">Pol IV</shortName>
        <ecNumber evidence="1">2.7.7.7</ecNumber>
    </recommendedName>
</protein>
<comment type="function">
    <text evidence="1">Poorly processive, error-prone DNA polymerase involved in untargeted mutagenesis. Copies undamaged DNA at stalled replication forks, which arise in vivo from mismatched or misaligned primer ends. These misaligned primers can be extended by PolIV. Exhibits no 3'-5' exonuclease (proofreading) activity. May be involved in translesional synthesis, in conjunction with the beta clamp from PolIII.</text>
</comment>
<comment type="catalytic activity">
    <reaction evidence="1">
        <text>DNA(n) + a 2'-deoxyribonucleoside 5'-triphosphate = DNA(n+1) + diphosphate</text>
        <dbReference type="Rhea" id="RHEA:22508"/>
        <dbReference type="Rhea" id="RHEA-COMP:17339"/>
        <dbReference type="Rhea" id="RHEA-COMP:17340"/>
        <dbReference type="ChEBI" id="CHEBI:33019"/>
        <dbReference type="ChEBI" id="CHEBI:61560"/>
        <dbReference type="ChEBI" id="CHEBI:173112"/>
        <dbReference type="EC" id="2.7.7.7"/>
    </reaction>
</comment>
<comment type="cofactor">
    <cofactor evidence="1">
        <name>Mg(2+)</name>
        <dbReference type="ChEBI" id="CHEBI:18420"/>
    </cofactor>
    <text evidence="1">Binds 2 magnesium ions per subunit.</text>
</comment>
<comment type="subunit">
    <text evidence="1">Monomer.</text>
</comment>
<comment type="subcellular location">
    <subcellularLocation>
        <location evidence="1">Cytoplasm</location>
    </subcellularLocation>
</comment>
<comment type="similarity">
    <text evidence="1">Belongs to the DNA polymerase type-Y family.</text>
</comment>
<feature type="chain" id="PRO_1000137123" description="DNA polymerase IV">
    <location>
        <begin position="1"/>
        <end position="356"/>
    </location>
</feature>
<feature type="domain" description="UmuC" evidence="1">
    <location>
        <begin position="7"/>
        <end position="188"/>
    </location>
</feature>
<feature type="active site" evidence="1">
    <location>
        <position position="107"/>
    </location>
</feature>
<feature type="binding site" evidence="1">
    <location>
        <position position="11"/>
    </location>
    <ligand>
        <name>Mg(2+)</name>
        <dbReference type="ChEBI" id="CHEBI:18420"/>
    </ligand>
</feature>
<feature type="binding site" evidence="1">
    <location>
        <position position="106"/>
    </location>
    <ligand>
        <name>Mg(2+)</name>
        <dbReference type="ChEBI" id="CHEBI:18420"/>
    </ligand>
</feature>
<feature type="site" description="Substrate discrimination" evidence="1">
    <location>
        <position position="16"/>
    </location>
</feature>
<accession>A3N148</accession>
<name>DPO4_ACTP2</name>
<proteinExistence type="inferred from homology"/>
<gene>
    <name evidence="1" type="primary">dinB</name>
    <name type="ordered locus">APL_1040</name>
</gene>
<evidence type="ECO:0000255" key="1">
    <source>
        <dbReference type="HAMAP-Rule" id="MF_01113"/>
    </source>
</evidence>
<reference key="1">
    <citation type="journal article" date="2008" name="J. Bacteriol.">
        <title>The complete genome sequence of Actinobacillus pleuropneumoniae L20 (serotype 5b).</title>
        <authorList>
            <person name="Foote S.J."/>
            <person name="Bosse J.T."/>
            <person name="Bouevitch A.B."/>
            <person name="Langford P.R."/>
            <person name="Young N.M."/>
            <person name="Nash J.H.E."/>
        </authorList>
    </citation>
    <scope>NUCLEOTIDE SEQUENCE [LARGE SCALE GENOMIC DNA]</scope>
    <source>
        <strain>L20</strain>
    </source>
</reference>